<dbReference type="EMBL" id="CP000251">
    <property type="protein sequence ID" value="ABC84112.1"/>
    <property type="molecule type" value="Genomic_DNA"/>
</dbReference>
<dbReference type="RefSeq" id="WP_011423394.1">
    <property type="nucleotide sequence ID" value="NC_007760.1"/>
</dbReference>
<dbReference type="SMR" id="Q2IHQ1"/>
<dbReference type="STRING" id="290397.Adeh_4349"/>
<dbReference type="KEGG" id="ade:Adeh_4349"/>
<dbReference type="eggNOG" id="COG0224">
    <property type="taxonomic scope" value="Bacteria"/>
</dbReference>
<dbReference type="HOGENOM" id="CLU_050669_0_1_7"/>
<dbReference type="OrthoDB" id="9812769at2"/>
<dbReference type="Proteomes" id="UP000001935">
    <property type="component" value="Chromosome"/>
</dbReference>
<dbReference type="GO" id="GO:0005886">
    <property type="term" value="C:plasma membrane"/>
    <property type="evidence" value="ECO:0007669"/>
    <property type="project" value="UniProtKB-SubCell"/>
</dbReference>
<dbReference type="GO" id="GO:0045259">
    <property type="term" value="C:proton-transporting ATP synthase complex"/>
    <property type="evidence" value="ECO:0007669"/>
    <property type="project" value="UniProtKB-KW"/>
</dbReference>
<dbReference type="GO" id="GO:0005524">
    <property type="term" value="F:ATP binding"/>
    <property type="evidence" value="ECO:0007669"/>
    <property type="project" value="UniProtKB-UniRule"/>
</dbReference>
<dbReference type="GO" id="GO:0046933">
    <property type="term" value="F:proton-transporting ATP synthase activity, rotational mechanism"/>
    <property type="evidence" value="ECO:0007669"/>
    <property type="project" value="UniProtKB-UniRule"/>
</dbReference>
<dbReference type="GO" id="GO:0042777">
    <property type="term" value="P:proton motive force-driven plasma membrane ATP synthesis"/>
    <property type="evidence" value="ECO:0007669"/>
    <property type="project" value="UniProtKB-UniRule"/>
</dbReference>
<dbReference type="CDD" id="cd12151">
    <property type="entry name" value="F1-ATPase_gamma"/>
    <property type="match status" value="1"/>
</dbReference>
<dbReference type="FunFam" id="1.10.287.80:FF:000003">
    <property type="entry name" value="ATP synthase gamma chain, chloroplastic"/>
    <property type="match status" value="1"/>
</dbReference>
<dbReference type="Gene3D" id="3.40.1380.10">
    <property type="match status" value="1"/>
</dbReference>
<dbReference type="Gene3D" id="1.10.287.80">
    <property type="entry name" value="ATP synthase, gamma subunit, helix hairpin domain"/>
    <property type="match status" value="1"/>
</dbReference>
<dbReference type="HAMAP" id="MF_00815">
    <property type="entry name" value="ATP_synth_gamma_bact"/>
    <property type="match status" value="1"/>
</dbReference>
<dbReference type="InterPro" id="IPR035968">
    <property type="entry name" value="ATP_synth_F1_ATPase_gsu"/>
</dbReference>
<dbReference type="InterPro" id="IPR000131">
    <property type="entry name" value="ATP_synth_F1_gsu"/>
</dbReference>
<dbReference type="InterPro" id="IPR023632">
    <property type="entry name" value="ATP_synth_F1_gsu_CS"/>
</dbReference>
<dbReference type="NCBIfam" id="TIGR01146">
    <property type="entry name" value="ATPsyn_F1gamma"/>
    <property type="match status" value="1"/>
</dbReference>
<dbReference type="PANTHER" id="PTHR11693">
    <property type="entry name" value="ATP SYNTHASE GAMMA CHAIN"/>
    <property type="match status" value="1"/>
</dbReference>
<dbReference type="PANTHER" id="PTHR11693:SF22">
    <property type="entry name" value="ATP SYNTHASE SUBUNIT GAMMA, MITOCHONDRIAL"/>
    <property type="match status" value="1"/>
</dbReference>
<dbReference type="Pfam" id="PF00231">
    <property type="entry name" value="ATP-synt"/>
    <property type="match status" value="1"/>
</dbReference>
<dbReference type="PRINTS" id="PR00126">
    <property type="entry name" value="ATPASEGAMMA"/>
</dbReference>
<dbReference type="SUPFAM" id="SSF52943">
    <property type="entry name" value="ATP synthase (F1-ATPase), gamma subunit"/>
    <property type="match status" value="1"/>
</dbReference>
<dbReference type="PROSITE" id="PS00153">
    <property type="entry name" value="ATPASE_GAMMA"/>
    <property type="match status" value="1"/>
</dbReference>
<keyword id="KW-0066">ATP synthesis</keyword>
<keyword id="KW-0997">Cell inner membrane</keyword>
<keyword id="KW-1003">Cell membrane</keyword>
<keyword id="KW-0139">CF(1)</keyword>
<keyword id="KW-0375">Hydrogen ion transport</keyword>
<keyword id="KW-0406">Ion transport</keyword>
<keyword id="KW-0472">Membrane</keyword>
<keyword id="KW-1185">Reference proteome</keyword>
<keyword id="KW-0813">Transport</keyword>
<gene>
    <name evidence="1" type="primary">atpG</name>
    <name type="ordered locus">Adeh_4349</name>
</gene>
<feature type="chain" id="PRO_1000053151" description="ATP synthase gamma chain">
    <location>
        <begin position="1"/>
        <end position="289"/>
    </location>
</feature>
<name>ATPG_ANADE</name>
<reference key="1">
    <citation type="submission" date="2006-01" db="EMBL/GenBank/DDBJ databases">
        <title>Complete sequence of Anaeromyxobacter dehalogenans 2CP-C.</title>
        <authorList>
            <person name="Copeland A."/>
            <person name="Lucas S."/>
            <person name="Lapidus A."/>
            <person name="Barry K."/>
            <person name="Detter J.C."/>
            <person name="Glavina T."/>
            <person name="Hammon N."/>
            <person name="Israni S."/>
            <person name="Pitluck S."/>
            <person name="Brettin T."/>
            <person name="Bruce D."/>
            <person name="Han C."/>
            <person name="Tapia R."/>
            <person name="Gilna P."/>
            <person name="Kiss H."/>
            <person name="Schmutz J."/>
            <person name="Larimer F."/>
            <person name="Land M."/>
            <person name="Kyrpides N."/>
            <person name="Anderson I."/>
            <person name="Sanford R.A."/>
            <person name="Ritalahti K.M."/>
            <person name="Thomas H.S."/>
            <person name="Kirby J.R."/>
            <person name="Zhulin I.B."/>
            <person name="Loeffler F.E."/>
            <person name="Richardson P."/>
        </authorList>
    </citation>
    <scope>NUCLEOTIDE SEQUENCE [LARGE SCALE GENOMIC DNA]</scope>
    <source>
        <strain>2CP-C</strain>
    </source>
</reference>
<proteinExistence type="inferred from homology"/>
<evidence type="ECO:0000255" key="1">
    <source>
        <dbReference type="HAMAP-Rule" id="MF_00815"/>
    </source>
</evidence>
<accession>Q2IHQ1</accession>
<comment type="function">
    <text evidence="1">Produces ATP from ADP in the presence of a proton gradient across the membrane. The gamma chain is believed to be important in regulating ATPase activity and the flow of protons through the CF(0) complex.</text>
</comment>
<comment type="subunit">
    <text evidence="1">F-type ATPases have 2 components, CF(1) - the catalytic core - and CF(0) - the membrane proton channel. CF(1) has five subunits: alpha(3), beta(3), gamma(1), delta(1), epsilon(1). CF(0) has three main subunits: a, b and c.</text>
</comment>
<comment type="subcellular location">
    <subcellularLocation>
        <location evidence="1">Cell inner membrane</location>
        <topology evidence="1">Peripheral membrane protein</topology>
    </subcellularLocation>
</comment>
<comment type="similarity">
    <text evidence="1">Belongs to the ATPase gamma chain family.</text>
</comment>
<organism>
    <name type="scientific">Anaeromyxobacter dehalogenans (strain 2CP-C)</name>
    <dbReference type="NCBI Taxonomy" id="290397"/>
    <lineage>
        <taxon>Bacteria</taxon>
        <taxon>Pseudomonadati</taxon>
        <taxon>Myxococcota</taxon>
        <taxon>Myxococcia</taxon>
        <taxon>Myxococcales</taxon>
        <taxon>Cystobacterineae</taxon>
        <taxon>Anaeromyxobacteraceae</taxon>
        <taxon>Anaeromyxobacter</taxon>
    </lineage>
</organism>
<protein>
    <recommendedName>
        <fullName evidence="1">ATP synthase gamma chain</fullName>
    </recommendedName>
    <alternativeName>
        <fullName evidence="1">ATP synthase F1 sector gamma subunit</fullName>
    </alternativeName>
    <alternativeName>
        <fullName evidence="1">F-ATPase gamma subunit</fullName>
    </alternativeName>
</protein>
<sequence>MPSLRDIRTRIGSVRSTRQITKAMKMVSAAKLRRAQDAVLKTRPYAMLLDQTLSRLAARAAAEEQVAHPLLAPRAQRTAEVVVVTSDRGLAGGFNSNICRFVQRFLTENADRFERIALATVGKKGREYFKARNLPIRRDYTGIHANLAYEKAEALAREATERYLAGEVDAVFLAYNEFKSAISQKQAVVQLLPVDTSAASADTAGVDFRYEPSREALLADLLPRHVAMQVWRALLESAASEHGARMSAMESATKNAEEMIASLSLQYNRARQAYVTKELSEIVSGAEAL</sequence>